<reference key="1">
    <citation type="journal article" date="2002" name="Mol. Phylogenet. Evol.">
        <title>Phylogenetics of asterids based on 3 coding and 3 non-coding chloroplast DNA markers and the utility of non-coding DNA at higher taxonomic levels.</title>
        <authorList>
            <person name="Bremer B."/>
            <person name="Bremer K."/>
            <person name="Heidari N."/>
            <person name="Erixon P."/>
            <person name="Olmstead R.G."/>
            <person name="Anderberg A.A."/>
            <person name="Kallersjo M."/>
            <person name="Barkhordarian E."/>
        </authorList>
    </citation>
    <scope>NUCLEOTIDE SEQUENCE [GENOMIC DNA]</scope>
</reference>
<keyword id="KW-0150">Chloroplast</keyword>
<keyword id="KW-0507">mRNA processing</keyword>
<keyword id="KW-0934">Plastid</keyword>
<keyword id="KW-0694">RNA-binding</keyword>
<keyword id="KW-0819">tRNA processing</keyword>
<gene>
    <name evidence="1" type="primary">matK</name>
</gene>
<feature type="chain" id="PRO_0000143294" description="Maturase K">
    <location>
        <begin position="1"/>
        <end position="513"/>
    </location>
</feature>
<comment type="function">
    <text evidence="1">Usually encoded in the trnK tRNA gene intron. Probably assists in splicing its own and other chloroplast group II introns.</text>
</comment>
<comment type="subcellular location">
    <subcellularLocation>
        <location>Plastid</location>
        <location>Chloroplast</location>
    </subcellularLocation>
</comment>
<comment type="similarity">
    <text evidence="1">Belongs to the intron maturase 2 family. MatK subfamily.</text>
</comment>
<organism>
    <name type="scientific">Byblis liniflora</name>
    <name type="common">Carnivorous plant</name>
    <dbReference type="NCBI Taxonomy" id="3770"/>
    <lineage>
        <taxon>Eukaryota</taxon>
        <taxon>Viridiplantae</taxon>
        <taxon>Streptophyta</taxon>
        <taxon>Embryophyta</taxon>
        <taxon>Tracheophyta</taxon>
        <taxon>Spermatophyta</taxon>
        <taxon>Magnoliopsida</taxon>
        <taxon>eudicotyledons</taxon>
        <taxon>Gunneridae</taxon>
        <taxon>Pentapetalae</taxon>
        <taxon>asterids</taxon>
        <taxon>lamiids</taxon>
        <taxon>Lamiales</taxon>
        <taxon>Byblidaceae</taxon>
        <taxon>Byblis</taxon>
    </lineage>
</organism>
<name>MATK_BYBLI</name>
<proteinExistence type="inferred from homology"/>
<accession>Q8MA72</accession>
<protein>
    <recommendedName>
        <fullName evidence="1">Maturase K</fullName>
    </recommendedName>
    <alternativeName>
        <fullName evidence="1">Intron maturase</fullName>
    </alternativeName>
</protein>
<evidence type="ECO:0000255" key="1">
    <source>
        <dbReference type="HAMAP-Rule" id="MF_01390"/>
    </source>
</evidence>
<dbReference type="EMBL" id="AJ429354">
    <property type="protein sequence ID" value="CAD22250.1"/>
    <property type="molecule type" value="Genomic_DNA"/>
</dbReference>
<dbReference type="GO" id="GO:0009507">
    <property type="term" value="C:chloroplast"/>
    <property type="evidence" value="ECO:0007669"/>
    <property type="project" value="UniProtKB-SubCell"/>
</dbReference>
<dbReference type="GO" id="GO:0003723">
    <property type="term" value="F:RNA binding"/>
    <property type="evidence" value="ECO:0007669"/>
    <property type="project" value="UniProtKB-KW"/>
</dbReference>
<dbReference type="GO" id="GO:0006397">
    <property type="term" value="P:mRNA processing"/>
    <property type="evidence" value="ECO:0007669"/>
    <property type="project" value="UniProtKB-KW"/>
</dbReference>
<dbReference type="GO" id="GO:0008380">
    <property type="term" value="P:RNA splicing"/>
    <property type="evidence" value="ECO:0007669"/>
    <property type="project" value="UniProtKB-UniRule"/>
</dbReference>
<dbReference type="GO" id="GO:0008033">
    <property type="term" value="P:tRNA processing"/>
    <property type="evidence" value="ECO:0007669"/>
    <property type="project" value="UniProtKB-KW"/>
</dbReference>
<dbReference type="HAMAP" id="MF_01390">
    <property type="entry name" value="MatK"/>
    <property type="match status" value="1"/>
</dbReference>
<dbReference type="InterPro" id="IPR024937">
    <property type="entry name" value="Domain_X"/>
</dbReference>
<dbReference type="InterPro" id="IPR002866">
    <property type="entry name" value="Maturase_MatK"/>
</dbReference>
<dbReference type="InterPro" id="IPR024942">
    <property type="entry name" value="Maturase_MatK_N"/>
</dbReference>
<dbReference type="PANTHER" id="PTHR34811">
    <property type="entry name" value="MATURASE K"/>
    <property type="match status" value="1"/>
</dbReference>
<dbReference type="PANTHER" id="PTHR34811:SF1">
    <property type="entry name" value="MATURASE K"/>
    <property type="match status" value="1"/>
</dbReference>
<dbReference type="Pfam" id="PF01348">
    <property type="entry name" value="Intron_maturas2"/>
    <property type="match status" value="1"/>
</dbReference>
<dbReference type="Pfam" id="PF01824">
    <property type="entry name" value="MatK_N"/>
    <property type="match status" value="1"/>
</dbReference>
<geneLocation type="chloroplast"/>
<sequence>MEEIQIYLQLERSQQHDFLYPLIFQEYIYAFAHDRGFNRSISSENLGYDNKFSFLIVKRLISRMYQQNHFFISLNDSNKNLFCARNKNFDSQIISEVFACIVEIPFSIPYINLEWKKKKIVKPQNLRSIHSTFPFLEDNFSHLNLLVDILIPYPIHAEILVQTLRYWIKDASSLHLLRFFLHEYCILNSFIIPKKASSSFSNFSKRNPKLFLFLYNSHVCEYESVFLFLRNQSSHLRSTSSGVLLERIYFYRKIERLVNTFVKLKYFQPNLWFVKEPYIHYVSYQKIASLASKGTSLLMKKWKCYFVTFWQWYFSLWFHPKRIYIKQLSNQSFYFLGYLSSVRMNFSVVRSQILGKSFLINNVIKKFDTLVPTIPMIASLAKAKFCNVLGHPISKPVWADLSDSHIIDRFWRICRNISHYHSGSSKKKSLYRIKYILRLSCARTLARKHKSTVRTFLKKLGSELLKEFFRSEEDVFSLTFHKASPAFWEVYRSRIWYLDIICLNDLGNPKSQF</sequence>